<gene>
    <name evidence="1" type="primary">gltX1</name>
    <name type="ordered locus">CHAB381_0111</name>
</gene>
<evidence type="ECO:0000255" key="1">
    <source>
        <dbReference type="HAMAP-Rule" id="MF_00022"/>
    </source>
</evidence>
<name>SYE1_CAMHC</name>
<organism>
    <name type="scientific">Campylobacter hominis (strain ATCC BAA-381 / DSM 21671 / CCUG 45161 / LMG 19568 / NCTC 13146 / CH001A)</name>
    <dbReference type="NCBI Taxonomy" id="360107"/>
    <lineage>
        <taxon>Bacteria</taxon>
        <taxon>Pseudomonadati</taxon>
        <taxon>Campylobacterota</taxon>
        <taxon>Epsilonproteobacteria</taxon>
        <taxon>Campylobacterales</taxon>
        <taxon>Campylobacteraceae</taxon>
        <taxon>Campylobacter</taxon>
    </lineage>
</organism>
<keyword id="KW-0030">Aminoacyl-tRNA synthetase</keyword>
<keyword id="KW-0067">ATP-binding</keyword>
<keyword id="KW-0963">Cytoplasm</keyword>
<keyword id="KW-0436">Ligase</keyword>
<keyword id="KW-0547">Nucleotide-binding</keyword>
<keyword id="KW-0648">Protein biosynthesis</keyword>
<keyword id="KW-1185">Reference proteome</keyword>
<reference key="1">
    <citation type="submission" date="2007-07" db="EMBL/GenBank/DDBJ databases">
        <title>Complete genome sequence of Campylobacter hominis ATCC BAA-381, a commensal isolated from the human gastrointestinal tract.</title>
        <authorList>
            <person name="Fouts D.E."/>
            <person name="Mongodin E.F."/>
            <person name="Puiu D."/>
            <person name="Sebastian Y."/>
            <person name="Miller W.G."/>
            <person name="Mandrell R.E."/>
            <person name="Nelson K.E."/>
        </authorList>
    </citation>
    <scope>NUCLEOTIDE SEQUENCE [LARGE SCALE GENOMIC DNA]</scope>
    <source>
        <strain>ATCC BAA-381 / DSM 21671 / CCUG 45161 / LMG 19568 / NCTC 13146 / CH001A</strain>
    </source>
</reference>
<comment type="function">
    <text evidence="1">Catalyzes the attachment of glutamate to tRNA(Glu) in a two-step reaction: glutamate is first activated by ATP to form Glu-AMP and then transferred to the acceptor end of tRNA(Glu).</text>
</comment>
<comment type="catalytic activity">
    <reaction evidence="1">
        <text>tRNA(Glu) + L-glutamate + ATP = L-glutamyl-tRNA(Glu) + AMP + diphosphate</text>
        <dbReference type="Rhea" id="RHEA:23540"/>
        <dbReference type="Rhea" id="RHEA-COMP:9663"/>
        <dbReference type="Rhea" id="RHEA-COMP:9680"/>
        <dbReference type="ChEBI" id="CHEBI:29985"/>
        <dbReference type="ChEBI" id="CHEBI:30616"/>
        <dbReference type="ChEBI" id="CHEBI:33019"/>
        <dbReference type="ChEBI" id="CHEBI:78442"/>
        <dbReference type="ChEBI" id="CHEBI:78520"/>
        <dbReference type="ChEBI" id="CHEBI:456215"/>
        <dbReference type="EC" id="6.1.1.17"/>
    </reaction>
</comment>
<comment type="subunit">
    <text evidence="1">Monomer.</text>
</comment>
<comment type="subcellular location">
    <subcellularLocation>
        <location evidence="1">Cytoplasm</location>
    </subcellularLocation>
</comment>
<comment type="similarity">
    <text evidence="1">Belongs to the class-I aminoacyl-tRNA synthetase family. Glutamate--tRNA ligase type 1 subfamily.</text>
</comment>
<protein>
    <recommendedName>
        <fullName evidence="1">Glutamate--tRNA ligase 1</fullName>
        <ecNumber evidence="1">6.1.1.17</ecNumber>
    </recommendedName>
    <alternativeName>
        <fullName evidence="1">Glutamyl-tRNA synthetase 1</fullName>
        <shortName evidence="1">GluRS 1</shortName>
    </alternativeName>
</protein>
<accession>A7HZN3</accession>
<dbReference type="EC" id="6.1.1.17" evidence="1"/>
<dbReference type="EMBL" id="CP000776">
    <property type="protein sequence ID" value="ABS50888.1"/>
    <property type="molecule type" value="Genomic_DNA"/>
</dbReference>
<dbReference type="RefSeq" id="WP_011991571.1">
    <property type="nucleotide sequence ID" value="NC_009714.1"/>
</dbReference>
<dbReference type="SMR" id="A7HZN3"/>
<dbReference type="STRING" id="360107.CHAB381_0111"/>
<dbReference type="KEGG" id="cha:CHAB381_0111"/>
<dbReference type="eggNOG" id="COG0008">
    <property type="taxonomic scope" value="Bacteria"/>
</dbReference>
<dbReference type="HOGENOM" id="CLU_015768_6_3_7"/>
<dbReference type="OrthoDB" id="9807503at2"/>
<dbReference type="Proteomes" id="UP000002407">
    <property type="component" value="Chromosome"/>
</dbReference>
<dbReference type="GO" id="GO:0005829">
    <property type="term" value="C:cytosol"/>
    <property type="evidence" value="ECO:0007669"/>
    <property type="project" value="TreeGrafter"/>
</dbReference>
<dbReference type="GO" id="GO:0005524">
    <property type="term" value="F:ATP binding"/>
    <property type="evidence" value="ECO:0007669"/>
    <property type="project" value="UniProtKB-UniRule"/>
</dbReference>
<dbReference type="GO" id="GO:0004818">
    <property type="term" value="F:glutamate-tRNA ligase activity"/>
    <property type="evidence" value="ECO:0007669"/>
    <property type="project" value="UniProtKB-UniRule"/>
</dbReference>
<dbReference type="GO" id="GO:0000049">
    <property type="term" value="F:tRNA binding"/>
    <property type="evidence" value="ECO:0007669"/>
    <property type="project" value="InterPro"/>
</dbReference>
<dbReference type="GO" id="GO:0008270">
    <property type="term" value="F:zinc ion binding"/>
    <property type="evidence" value="ECO:0007669"/>
    <property type="project" value="InterPro"/>
</dbReference>
<dbReference type="GO" id="GO:0006424">
    <property type="term" value="P:glutamyl-tRNA aminoacylation"/>
    <property type="evidence" value="ECO:0007669"/>
    <property type="project" value="UniProtKB-UniRule"/>
</dbReference>
<dbReference type="CDD" id="cd00808">
    <property type="entry name" value="GluRS_core"/>
    <property type="match status" value="1"/>
</dbReference>
<dbReference type="FunFam" id="3.40.50.620:FF:000007">
    <property type="entry name" value="Glutamate--tRNA ligase"/>
    <property type="match status" value="1"/>
</dbReference>
<dbReference type="Gene3D" id="1.10.10.350">
    <property type="match status" value="1"/>
</dbReference>
<dbReference type="Gene3D" id="3.40.50.620">
    <property type="entry name" value="HUPs"/>
    <property type="match status" value="1"/>
</dbReference>
<dbReference type="HAMAP" id="MF_00022">
    <property type="entry name" value="Glu_tRNA_synth_type1"/>
    <property type="match status" value="1"/>
</dbReference>
<dbReference type="InterPro" id="IPR045462">
    <property type="entry name" value="aa-tRNA-synth_I_cd-bd"/>
</dbReference>
<dbReference type="InterPro" id="IPR020751">
    <property type="entry name" value="aa-tRNA-synth_I_codon-bd_sub2"/>
</dbReference>
<dbReference type="InterPro" id="IPR001412">
    <property type="entry name" value="aa-tRNA-synth_I_CS"/>
</dbReference>
<dbReference type="InterPro" id="IPR008925">
    <property type="entry name" value="aa_tRNA-synth_I_cd-bd_sf"/>
</dbReference>
<dbReference type="InterPro" id="IPR004527">
    <property type="entry name" value="Glu-tRNA-ligase_bac/mito"/>
</dbReference>
<dbReference type="InterPro" id="IPR000924">
    <property type="entry name" value="Glu/Gln-tRNA-synth"/>
</dbReference>
<dbReference type="InterPro" id="IPR020058">
    <property type="entry name" value="Glu/Gln-tRNA-synth_Ib_cat-dom"/>
</dbReference>
<dbReference type="InterPro" id="IPR049940">
    <property type="entry name" value="GluQ/Sye"/>
</dbReference>
<dbReference type="InterPro" id="IPR033910">
    <property type="entry name" value="GluRS_core"/>
</dbReference>
<dbReference type="InterPro" id="IPR014729">
    <property type="entry name" value="Rossmann-like_a/b/a_fold"/>
</dbReference>
<dbReference type="NCBIfam" id="TIGR00464">
    <property type="entry name" value="gltX_bact"/>
    <property type="match status" value="1"/>
</dbReference>
<dbReference type="PANTHER" id="PTHR43311">
    <property type="entry name" value="GLUTAMATE--TRNA LIGASE"/>
    <property type="match status" value="1"/>
</dbReference>
<dbReference type="PANTHER" id="PTHR43311:SF2">
    <property type="entry name" value="GLUTAMATE--TRNA LIGASE, MITOCHONDRIAL-RELATED"/>
    <property type="match status" value="1"/>
</dbReference>
<dbReference type="Pfam" id="PF19269">
    <property type="entry name" value="Anticodon_2"/>
    <property type="match status" value="1"/>
</dbReference>
<dbReference type="Pfam" id="PF00749">
    <property type="entry name" value="tRNA-synt_1c"/>
    <property type="match status" value="1"/>
</dbReference>
<dbReference type="PRINTS" id="PR00987">
    <property type="entry name" value="TRNASYNTHGLU"/>
</dbReference>
<dbReference type="SUPFAM" id="SSF48163">
    <property type="entry name" value="An anticodon-binding domain of class I aminoacyl-tRNA synthetases"/>
    <property type="match status" value="1"/>
</dbReference>
<dbReference type="SUPFAM" id="SSF52374">
    <property type="entry name" value="Nucleotidylyl transferase"/>
    <property type="match status" value="1"/>
</dbReference>
<dbReference type="PROSITE" id="PS00178">
    <property type="entry name" value="AA_TRNA_LIGASE_I"/>
    <property type="match status" value="1"/>
</dbReference>
<proteinExistence type="inferred from homology"/>
<sequence length="462" mass="52890">MICTRFAPSPTGYLHIGGLRTALFNYLYARANGGKFVLRIEDTDLKRNSVEAANAIVEAFKWCGLDYDGEIVYQSSRFDLYKKYIQKLLDENKAYKCYMSKAELDTLRAEQEARKERPKYDGRYRDFNGIPPKGIDPVIRIKAPLSGTIEFDDGIKGSMKFNANDILDDFIIARSDGTPTYNFTVVIDDALMGITDVIRGDDHLSNTPKQIVLYNALGFKIPKFYHVAMINGSDGRKLSKRHGATDVMEYKRMGYLPEALLNFLVRLGWSHGDDEIFSLDDMKKYFDPNHISKSSSTFNQSKLEWLNAYYIKNSSNKRLIKELKNFNINIENHPKKELLIDSFKERAKTLADMAKGIDSLLSRPKTYEQKAFNKFINENSKNLLQKFSEILDAQNLKAKEIEEKTMQFLEKEGEKLKNLAQPLRVAITGTSVSPSIFEVIEILGVNEIKLRIENLIKNKESL</sequence>
<feature type="chain" id="PRO_0000367636" description="Glutamate--tRNA ligase 1">
    <location>
        <begin position="1"/>
        <end position="462"/>
    </location>
</feature>
<feature type="short sequence motif" description="'HIGH' region" evidence="1">
    <location>
        <begin position="8"/>
        <end position="18"/>
    </location>
</feature>
<feature type="short sequence motif" description="'KMSKS' region" evidence="1">
    <location>
        <begin position="237"/>
        <end position="241"/>
    </location>
</feature>
<feature type="binding site" evidence="1">
    <location>
        <position position="240"/>
    </location>
    <ligand>
        <name>ATP</name>
        <dbReference type="ChEBI" id="CHEBI:30616"/>
    </ligand>
</feature>